<sequence>MNKCYLKYLLQSWTPRYSIRSNTRNFLQEILSFNEPQNLTESNWKRWLQCFNRYNLPLQMWYKISPQQWKSQVSKHWKDRNHFSKNSHRKNQSLLLYKQKEFYSIFASDSSSRYTREIERLNKRYRCNLFLYSYLDHTKSLNMRRFPVWRSEERETILNNRIKEIRNFHLFNNERNNENSINSLGKEKNLFFRSNLVLWLVPEFLGKKNIHKTEFIPVFYPSLVRERGEKTIQNRKSLRERERHESIRQWRWESKDLEERFKELGDMASVMTFIQNKKNIISLSVKMREDLDLFRLLFRRDIGLNRLTINSEHRLPRVLDDEILMCKIITTLLKFKSRFQERLDFNIFDESISRIRKFESERKTISKSFSLEEILLPKRCKELRILNSLYSKYDINEEAKFDEGSLGKNRGSNEKLVRINEEFNTNVNQSIKRFLWPSYRLEDLACMNRFWFNTSNGSRFSMLRIRLYLLIHD</sequence>
<accession>Q85BK9</accession>
<dbReference type="EMBL" id="AB086179">
    <property type="protein sequence ID" value="BAC55408.1"/>
    <property type="molecule type" value="Genomic_DNA"/>
</dbReference>
<dbReference type="EMBL" id="AB087491">
    <property type="protein sequence ID" value="BAC55508.1"/>
    <property type="molecule type" value="mRNA"/>
</dbReference>
<dbReference type="GO" id="GO:0009507">
    <property type="term" value="C:chloroplast"/>
    <property type="evidence" value="ECO:0007669"/>
    <property type="project" value="UniProtKB-SubCell"/>
</dbReference>
<dbReference type="GO" id="GO:0015031">
    <property type="term" value="P:protein transport"/>
    <property type="evidence" value="ECO:0007669"/>
    <property type="project" value="UniProtKB-KW"/>
</dbReference>
<feature type="chain" id="PRO_0000217294" description="Putative protein TIC 214 C-terminal part">
    <location>
        <begin position="1"/>
        <end position="473"/>
    </location>
</feature>
<proteinExistence type="uncertain"/>
<geneLocation type="chloroplast"/>
<name>T214B_ANTAG</name>
<gene>
    <name evidence="1" type="primary">TIC214</name>
    <name type="synonym">ycf1</name>
</gene>
<organism>
    <name type="scientific">Anthoceros angustus</name>
    <name type="common">Hornwort</name>
    <name type="synonym">Anthoceros formosae</name>
    <dbReference type="NCBI Taxonomy" id="48387"/>
    <lineage>
        <taxon>Eukaryota</taxon>
        <taxon>Viridiplantae</taxon>
        <taxon>Streptophyta</taxon>
        <taxon>Embryophyta</taxon>
        <taxon>Anthocerotophyta</taxon>
        <taxon>Anthocerotopsida</taxon>
        <taxon>Anthocerotidae</taxon>
        <taxon>Anthocerotales</taxon>
        <taxon>Anthocerotaceae</taxon>
        <taxon>Anthoceros</taxon>
    </lineage>
</organism>
<evidence type="ECO:0000250" key="1">
    <source>
        <dbReference type="UniProtKB" id="P56785"/>
    </source>
</evidence>
<evidence type="ECO:0000269" key="2">
    <source>
    </source>
</evidence>
<evidence type="ECO:0000269" key="3">
    <source>
    </source>
</evidence>
<evidence type="ECO:0000305" key="4"/>
<protein>
    <recommendedName>
        <fullName evidence="1">Putative protein TIC 214 C-terminal part</fullName>
    </recommendedName>
    <alternativeName>
        <fullName>ORF473</fullName>
    </alternativeName>
    <alternativeName>
        <fullName evidence="1">Translocon at the inner envelope membrane of chloroplasts 214</fullName>
        <shortName evidence="1">AtTIC214</shortName>
    </alternativeName>
</protein>
<comment type="function">
    <text evidence="1">Involved in protein precursor import into chloroplasts. May be part of an intermediate translocation complex acting as a protein-conducting channel at the inner envelope.</text>
</comment>
<comment type="subunit">
    <text evidence="1">Part of the Tic complex.</text>
</comment>
<comment type="subcellular location">
    <subcellularLocation>
        <location evidence="1">Plastid</location>
        <location evidence="1">Chloroplast</location>
    </subcellularLocation>
</comment>
<comment type="RNA editing">
    <location>
        <position position="129" evidence="2 3"/>
    </location>
    <location>
        <position position="239" evidence="2 3"/>
    </location>
    <location>
        <position position="275" evidence="2 3"/>
    </location>
    <location>
        <position position="389" evidence="2 3"/>
    </location>
    <location>
        <position position="440" evidence="2 3"/>
    </location>
    <location>
        <position position="459" evidence="2 3"/>
    </location>
    <text>The nonsense codons in positions 239, 275, 440 and 459 are modified to sense codons.</text>
</comment>
<comment type="similarity">
    <text evidence="4">Belongs to the TIC214 family.</text>
</comment>
<comment type="caution">
    <text>Could be the product of a pseudogene. In A.formosae this protein is in two parts: ORF 1031 (N-terminal) and ORF 473 (C-terminal).</text>
</comment>
<reference key="1">
    <citation type="journal article" date="2003" name="Nucleic Acids Res.">
        <title>The complete nucleotide sequence of the hornwort (Anthoceros formosae) chloroplast genome: insight into the earliest land plants.</title>
        <authorList>
            <person name="Kugita M."/>
            <person name="Kaneko A."/>
            <person name="Yamamoto Y."/>
            <person name="Takeya Y."/>
            <person name="Matsumoto T."/>
            <person name="Yoshinaga K."/>
        </authorList>
    </citation>
    <scope>NUCLEOTIDE SEQUENCE [LARGE SCALE GENOMIC DNA]</scope>
    <scope>RNA EDITING</scope>
</reference>
<reference key="2">
    <citation type="journal article" date="2003" name="Nucleic Acids Res.">
        <title>RNA editing in hornwort chloroplasts makes more than half the genes functional.</title>
        <authorList>
            <person name="Kugita M."/>
            <person name="Yamamoto Y."/>
            <person name="Fujikawa T."/>
            <person name="Matsumoto T."/>
            <person name="Yoshinaga K."/>
        </authorList>
    </citation>
    <scope>NUCLEOTIDE SEQUENCE [MRNA]</scope>
    <scope>RNA EDITING</scope>
    <source>
        <tissue>Thallus</tissue>
    </source>
</reference>
<keyword id="KW-0150">Chloroplast</keyword>
<keyword id="KW-0934">Plastid</keyword>
<keyword id="KW-0653">Protein transport</keyword>
<keyword id="KW-0691">RNA editing</keyword>
<keyword id="KW-0813">Transport</keyword>